<dbReference type="EC" id="1.5.1.5" evidence="1"/>
<dbReference type="EC" id="3.5.4.9" evidence="1"/>
<dbReference type="EMBL" id="AP009552">
    <property type="protein sequence ID" value="BAG04496.1"/>
    <property type="molecule type" value="Genomic_DNA"/>
</dbReference>
<dbReference type="RefSeq" id="WP_012267228.1">
    <property type="nucleotide sequence ID" value="NC_010296.1"/>
</dbReference>
<dbReference type="SMR" id="B0JUP8"/>
<dbReference type="STRING" id="449447.MAE_46740"/>
<dbReference type="PaxDb" id="449447-MAE_46740"/>
<dbReference type="EnsemblBacteria" id="BAG04496">
    <property type="protein sequence ID" value="BAG04496"/>
    <property type="gene ID" value="MAE_46740"/>
</dbReference>
<dbReference type="KEGG" id="mar:MAE_46740"/>
<dbReference type="PATRIC" id="fig|449447.4.peg.4258"/>
<dbReference type="eggNOG" id="COG0190">
    <property type="taxonomic scope" value="Bacteria"/>
</dbReference>
<dbReference type="HOGENOM" id="CLU_034045_2_1_3"/>
<dbReference type="BioCyc" id="MAER449447:MAE_RS20310-MONOMER"/>
<dbReference type="UniPathway" id="UPA00193"/>
<dbReference type="Proteomes" id="UP000001510">
    <property type="component" value="Chromosome"/>
</dbReference>
<dbReference type="GO" id="GO:0005829">
    <property type="term" value="C:cytosol"/>
    <property type="evidence" value="ECO:0007669"/>
    <property type="project" value="TreeGrafter"/>
</dbReference>
<dbReference type="GO" id="GO:0004477">
    <property type="term" value="F:methenyltetrahydrofolate cyclohydrolase activity"/>
    <property type="evidence" value="ECO:0007669"/>
    <property type="project" value="UniProtKB-UniRule"/>
</dbReference>
<dbReference type="GO" id="GO:0004488">
    <property type="term" value="F:methylenetetrahydrofolate dehydrogenase (NADP+) activity"/>
    <property type="evidence" value="ECO:0007669"/>
    <property type="project" value="UniProtKB-UniRule"/>
</dbReference>
<dbReference type="GO" id="GO:0000105">
    <property type="term" value="P:L-histidine biosynthetic process"/>
    <property type="evidence" value="ECO:0007669"/>
    <property type="project" value="UniProtKB-KW"/>
</dbReference>
<dbReference type="GO" id="GO:0009086">
    <property type="term" value="P:methionine biosynthetic process"/>
    <property type="evidence" value="ECO:0007669"/>
    <property type="project" value="UniProtKB-KW"/>
</dbReference>
<dbReference type="GO" id="GO:0006164">
    <property type="term" value="P:purine nucleotide biosynthetic process"/>
    <property type="evidence" value="ECO:0007669"/>
    <property type="project" value="UniProtKB-KW"/>
</dbReference>
<dbReference type="GO" id="GO:0035999">
    <property type="term" value="P:tetrahydrofolate interconversion"/>
    <property type="evidence" value="ECO:0007669"/>
    <property type="project" value="UniProtKB-UniRule"/>
</dbReference>
<dbReference type="CDD" id="cd01080">
    <property type="entry name" value="NAD_bind_m-THF_DH_Cyclohyd"/>
    <property type="match status" value="1"/>
</dbReference>
<dbReference type="FunFam" id="3.40.50.720:FF:000094">
    <property type="entry name" value="Bifunctional protein FolD"/>
    <property type="match status" value="1"/>
</dbReference>
<dbReference type="FunFam" id="3.40.50.10860:FF:000005">
    <property type="entry name" value="C-1-tetrahydrofolate synthase, cytoplasmic, putative"/>
    <property type="match status" value="1"/>
</dbReference>
<dbReference type="Gene3D" id="3.40.50.10860">
    <property type="entry name" value="Leucine Dehydrogenase, chain A, domain 1"/>
    <property type="match status" value="1"/>
</dbReference>
<dbReference type="Gene3D" id="3.40.50.720">
    <property type="entry name" value="NAD(P)-binding Rossmann-like Domain"/>
    <property type="match status" value="1"/>
</dbReference>
<dbReference type="HAMAP" id="MF_01576">
    <property type="entry name" value="THF_DHG_CYH"/>
    <property type="match status" value="1"/>
</dbReference>
<dbReference type="InterPro" id="IPR046346">
    <property type="entry name" value="Aminoacid_DH-like_N_sf"/>
</dbReference>
<dbReference type="InterPro" id="IPR036291">
    <property type="entry name" value="NAD(P)-bd_dom_sf"/>
</dbReference>
<dbReference type="InterPro" id="IPR000672">
    <property type="entry name" value="THF_DH/CycHdrlase"/>
</dbReference>
<dbReference type="InterPro" id="IPR020630">
    <property type="entry name" value="THF_DH/CycHdrlase_cat_dom"/>
</dbReference>
<dbReference type="InterPro" id="IPR020867">
    <property type="entry name" value="THF_DH/CycHdrlase_CS"/>
</dbReference>
<dbReference type="InterPro" id="IPR020631">
    <property type="entry name" value="THF_DH/CycHdrlase_NAD-bd_dom"/>
</dbReference>
<dbReference type="NCBIfam" id="NF010783">
    <property type="entry name" value="PRK14186.1"/>
    <property type="match status" value="1"/>
</dbReference>
<dbReference type="PANTHER" id="PTHR48099:SF5">
    <property type="entry name" value="C-1-TETRAHYDROFOLATE SYNTHASE, CYTOPLASMIC"/>
    <property type="match status" value="1"/>
</dbReference>
<dbReference type="PANTHER" id="PTHR48099">
    <property type="entry name" value="C-1-TETRAHYDROFOLATE SYNTHASE, CYTOPLASMIC-RELATED"/>
    <property type="match status" value="1"/>
</dbReference>
<dbReference type="Pfam" id="PF00763">
    <property type="entry name" value="THF_DHG_CYH"/>
    <property type="match status" value="1"/>
</dbReference>
<dbReference type="Pfam" id="PF02882">
    <property type="entry name" value="THF_DHG_CYH_C"/>
    <property type="match status" value="1"/>
</dbReference>
<dbReference type="PRINTS" id="PR00085">
    <property type="entry name" value="THFDHDRGNASE"/>
</dbReference>
<dbReference type="SUPFAM" id="SSF53223">
    <property type="entry name" value="Aminoacid dehydrogenase-like, N-terminal domain"/>
    <property type="match status" value="1"/>
</dbReference>
<dbReference type="SUPFAM" id="SSF51735">
    <property type="entry name" value="NAD(P)-binding Rossmann-fold domains"/>
    <property type="match status" value="1"/>
</dbReference>
<dbReference type="PROSITE" id="PS00766">
    <property type="entry name" value="THF_DHG_CYH_1"/>
    <property type="match status" value="1"/>
</dbReference>
<dbReference type="PROSITE" id="PS00767">
    <property type="entry name" value="THF_DHG_CYH_2"/>
    <property type="match status" value="1"/>
</dbReference>
<comment type="function">
    <text evidence="1">Catalyzes the oxidation of 5,10-methylenetetrahydrofolate to 5,10-methenyltetrahydrofolate and then the hydrolysis of 5,10-methenyltetrahydrofolate to 10-formyltetrahydrofolate.</text>
</comment>
<comment type="catalytic activity">
    <reaction evidence="1">
        <text>(6R)-5,10-methylene-5,6,7,8-tetrahydrofolate + NADP(+) = (6R)-5,10-methenyltetrahydrofolate + NADPH</text>
        <dbReference type="Rhea" id="RHEA:22812"/>
        <dbReference type="ChEBI" id="CHEBI:15636"/>
        <dbReference type="ChEBI" id="CHEBI:57455"/>
        <dbReference type="ChEBI" id="CHEBI:57783"/>
        <dbReference type="ChEBI" id="CHEBI:58349"/>
        <dbReference type="EC" id="1.5.1.5"/>
    </reaction>
</comment>
<comment type="catalytic activity">
    <reaction evidence="1">
        <text>(6R)-5,10-methenyltetrahydrofolate + H2O = (6R)-10-formyltetrahydrofolate + H(+)</text>
        <dbReference type="Rhea" id="RHEA:23700"/>
        <dbReference type="ChEBI" id="CHEBI:15377"/>
        <dbReference type="ChEBI" id="CHEBI:15378"/>
        <dbReference type="ChEBI" id="CHEBI:57455"/>
        <dbReference type="ChEBI" id="CHEBI:195366"/>
        <dbReference type="EC" id="3.5.4.9"/>
    </reaction>
</comment>
<comment type="pathway">
    <text evidence="1">One-carbon metabolism; tetrahydrofolate interconversion.</text>
</comment>
<comment type="subunit">
    <text evidence="1">Homodimer.</text>
</comment>
<comment type="similarity">
    <text evidence="1">Belongs to the tetrahydrofolate dehydrogenase/cyclohydrolase family.</text>
</comment>
<gene>
    <name evidence="1" type="primary">folD</name>
    <name type="ordered locus">MAE_46740</name>
</gene>
<accession>B0JUP8</accession>
<organism>
    <name type="scientific">Microcystis aeruginosa (strain NIES-843 / IAM M-2473)</name>
    <dbReference type="NCBI Taxonomy" id="449447"/>
    <lineage>
        <taxon>Bacteria</taxon>
        <taxon>Bacillati</taxon>
        <taxon>Cyanobacteriota</taxon>
        <taxon>Cyanophyceae</taxon>
        <taxon>Oscillatoriophycideae</taxon>
        <taxon>Chroococcales</taxon>
        <taxon>Microcystaceae</taxon>
        <taxon>Microcystis</taxon>
    </lineage>
</organism>
<sequence>MSVTTCQILDGKALAQKIQLGLGERIQTLKSPMGRPPGLAVLMVGDNPASAVYVRNKEKACTKIGMASFGRHFSTDTSELEILAEIVRLNQDERVDGILIQLPLPKHLDAVSLLYQIDPKKDADGLHPLNLGGLVRGEDCIRSCTPAGVMALLKEYNIPIAGKHAVVVGRSILVGKPLALMLLEENATVTIAHSRTENLAEITRSADILVPAVGKANLITKDMVKPGAVVVDVGINRVADRLVGDVDYAGVLEVASYLTPVPGGVGPMTVAMLLKNTLLSYERKL</sequence>
<protein>
    <recommendedName>
        <fullName evidence="1">Bifunctional protein FolD</fullName>
    </recommendedName>
    <domain>
        <recommendedName>
            <fullName evidence="1">Methylenetetrahydrofolate dehydrogenase</fullName>
            <ecNumber evidence="1">1.5.1.5</ecNumber>
        </recommendedName>
    </domain>
    <domain>
        <recommendedName>
            <fullName evidence="1">Methenyltetrahydrofolate cyclohydrolase</fullName>
            <ecNumber evidence="1">3.5.4.9</ecNumber>
        </recommendedName>
    </domain>
</protein>
<evidence type="ECO:0000255" key="1">
    <source>
        <dbReference type="HAMAP-Rule" id="MF_01576"/>
    </source>
</evidence>
<feature type="chain" id="PRO_1000196792" description="Bifunctional protein FolD">
    <location>
        <begin position="1"/>
        <end position="285"/>
    </location>
</feature>
<feature type="binding site" evidence="1">
    <location>
        <begin position="169"/>
        <end position="171"/>
    </location>
    <ligand>
        <name>NADP(+)</name>
        <dbReference type="ChEBI" id="CHEBI:58349"/>
    </ligand>
</feature>
<feature type="binding site" evidence="1">
    <location>
        <position position="194"/>
    </location>
    <ligand>
        <name>NADP(+)</name>
        <dbReference type="ChEBI" id="CHEBI:58349"/>
    </ligand>
</feature>
<feature type="binding site" evidence="1">
    <location>
        <position position="235"/>
    </location>
    <ligand>
        <name>NADP(+)</name>
        <dbReference type="ChEBI" id="CHEBI:58349"/>
    </ligand>
</feature>
<keyword id="KW-0028">Amino-acid biosynthesis</keyword>
<keyword id="KW-0368">Histidine biosynthesis</keyword>
<keyword id="KW-0378">Hydrolase</keyword>
<keyword id="KW-0486">Methionine biosynthesis</keyword>
<keyword id="KW-0511">Multifunctional enzyme</keyword>
<keyword id="KW-0521">NADP</keyword>
<keyword id="KW-0554">One-carbon metabolism</keyword>
<keyword id="KW-0560">Oxidoreductase</keyword>
<keyword id="KW-0658">Purine biosynthesis</keyword>
<name>FOLD_MICAN</name>
<proteinExistence type="inferred from homology"/>
<reference key="1">
    <citation type="journal article" date="2007" name="DNA Res.">
        <title>Complete genomic structure of the bloom-forming toxic cyanobacterium Microcystis aeruginosa NIES-843.</title>
        <authorList>
            <person name="Kaneko T."/>
            <person name="Nakajima N."/>
            <person name="Okamoto S."/>
            <person name="Suzuki I."/>
            <person name="Tanabe Y."/>
            <person name="Tamaoki M."/>
            <person name="Nakamura Y."/>
            <person name="Kasai F."/>
            <person name="Watanabe A."/>
            <person name="Kawashima K."/>
            <person name="Kishida Y."/>
            <person name="Ono A."/>
            <person name="Shimizu Y."/>
            <person name="Takahashi C."/>
            <person name="Minami C."/>
            <person name="Fujishiro T."/>
            <person name="Kohara M."/>
            <person name="Katoh M."/>
            <person name="Nakazaki N."/>
            <person name="Nakayama S."/>
            <person name="Yamada M."/>
            <person name="Tabata S."/>
            <person name="Watanabe M.M."/>
        </authorList>
    </citation>
    <scope>NUCLEOTIDE SEQUENCE [LARGE SCALE GENOMIC DNA]</scope>
    <source>
        <strain>NIES-843 / IAM M-247</strain>
    </source>
</reference>